<feature type="chain" id="PRO_1000140010" description="Pimeloyl-[acyl-carrier protein] methyl ester esterase">
    <location>
        <begin position="1"/>
        <end position="255"/>
    </location>
</feature>
<feature type="active site" description="Nucleophile" evidence="1">
    <location>
        <position position="78"/>
    </location>
</feature>
<feature type="active site" evidence="1">
    <location>
        <position position="203"/>
    </location>
</feature>
<feature type="active site" evidence="1">
    <location>
        <position position="233"/>
    </location>
</feature>
<feature type="binding site" evidence="1">
    <location>
        <position position="18"/>
    </location>
    <ligand>
        <name>substrate</name>
    </ligand>
</feature>
<feature type="binding site" evidence="1">
    <location>
        <begin position="78"/>
        <end position="79"/>
    </location>
    <ligand>
        <name>substrate</name>
    </ligand>
</feature>
<feature type="binding site" evidence="1">
    <location>
        <begin position="139"/>
        <end position="143"/>
    </location>
    <ligand>
        <name>substrate</name>
    </ligand>
</feature>
<feature type="binding site" evidence="1">
    <location>
        <position position="233"/>
    </location>
    <ligand>
        <name>substrate</name>
    </ligand>
</feature>
<protein>
    <recommendedName>
        <fullName evidence="1">Pimeloyl-[acyl-carrier protein] methyl ester esterase</fullName>
        <ecNumber evidence="1">3.1.1.85</ecNumber>
    </recommendedName>
    <alternativeName>
        <fullName evidence="1">Biotin synthesis protein BioH</fullName>
    </alternativeName>
    <alternativeName>
        <fullName evidence="1">Carboxylesterase BioH</fullName>
    </alternativeName>
</protein>
<comment type="function">
    <text evidence="1">The physiological role of BioH is to remove the methyl group introduced by BioC when the pimeloyl moiety is complete. It allows to synthesize pimeloyl-ACP via the fatty acid synthetic pathway through the hydrolysis of the ester bonds of pimeloyl-ACP esters.</text>
</comment>
<comment type="catalytic activity">
    <reaction evidence="1">
        <text>6-carboxyhexanoyl-[ACP] methyl ester + H2O = 6-carboxyhexanoyl-[ACP] + methanol + H(+)</text>
        <dbReference type="Rhea" id="RHEA:42700"/>
        <dbReference type="Rhea" id="RHEA-COMP:9955"/>
        <dbReference type="Rhea" id="RHEA-COMP:10186"/>
        <dbReference type="ChEBI" id="CHEBI:15377"/>
        <dbReference type="ChEBI" id="CHEBI:15378"/>
        <dbReference type="ChEBI" id="CHEBI:17790"/>
        <dbReference type="ChEBI" id="CHEBI:78846"/>
        <dbReference type="ChEBI" id="CHEBI:82735"/>
        <dbReference type="EC" id="3.1.1.85"/>
    </reaction>
</comment>
<comment type="pathway">
    <text evidence="1">Cofactor biosynthesis; biotin biosynthesis.</text>
</comment>
<comment type="subunit">
    <text evidence="1">Monomer.</text>
</comment>
<comment type="subcellular location">
    <subcellularLocation>
        <location evidence="1">Cytoplasm</location>
    </subcellularLocation>
</comment>
<comment type="similarity">
    <text evidence="1">Belongs to the AB hydrolase superfamily. Carboxylesterase BioH family.</text>
</comment>
<evidence type="ECO:0000255" key="1">
    <source>
        <dbReference type="HAMAP-Rule" id="MF_01260"/>
    </source>
</evidence>
<keyword id="KW-0093">Biotin biosynthesis</keyword>
<keyword id="KW-0963">Cytoplasm</keyword>
<keyword id="KW-0378">Hydrolase</keyword>
<keyword id="KW-0719">Serine esterase</keyword>
<gene>
    <name evidence="1" type="primary">bioH</name>
    <name type="ordered locus">XfasM23_0627</name>
</gene>
<sequence>MYIEVTGYGPALVLIHGWAMHSGVFAPLVEQLRPHHTLYLVDLPGHGYNHTTPTPLALPQVVHAIAAATPPAVWLGWSLGGLFALHAAATLPQVRGLIMLAATPCFVRREDWPHAVEVSILTQFAQDLKQNYTETINRFLALDTLGSTHAQSELRQLRKILNARHTPNTATLQAGLELLAHTDLRRALIDLTPPSLWIAGQRDRLVPAASIQAATVLAPSDQTELLTITGGGHAPFLSHANQMTAALQHFIATLP</sequence>
<accession>B2I9H6</accession>
<organism>
    <name type="scientific">Xylella fastidiosa (strain M23)</name>
    <dbReference type="NCBI Taxonomy" id="405441"/>
    <lineage>
        <taxon>Bacteria</taxon>
        <taxon>Pseudomonadati</taxon>
        <taxon>Pseudomonadota</taxon>
        <taxon>Gammaproteobacteria</taxon>
        <taxon>Lysobacterales</taxon>
        <taxon>Lysobacteraceae</taxon>
        <taxon>Xylella</taxon>
    </lineage>
</organism>
<name>BIOH_XYLF2</name>
<dbReference type="EC" id="3.1.1.85" evidence="1"/>
<dbReference type="EMBL" id="CP001011">
    <property type="protein sequence ID" value="ACB92070.1"/>
    <property type="molecule type" value="Genomic_DNA"/>
</dbReference>
<dbReference type="RefSeq" id="WP_004090643.1">
    <property type="nucleotide sequence ID" value="NC_010577.1"/>
</dbReference>
<dbReference type="SMR" id="B2I9H6"/>
<dbReference type="ESTHER" id="xylfa-XF1356">
    <property type="family name" value="BioH"/>
</dbReference>
<dbReference type="GeneID" id="93904312"/>
<dbReference type="KEGG" id="xfn:XfasM23_0627"/>
<dbReference type="HOGENOM" id="CLU_020336_12_2_6"/>
<dbReference type="UniPathway" id="UPA00078"/>
<dbReference type="Proteomes" id="UP000001698">
    <property type="component" value="Chromosome"/>
</dbReference>
<dbReference type="GO" id="GO:0005737">
    <property type="term" value="C:cytoplasm"/>
    <property type="evidence" value="ECO:0007669"/>
    <property type="project" value="UniProtKB-SubCell"/>
</dbReference>
<dbReference type="GO" id="GO:0090499">
    <property type="term" value="F:pimelyl-[acyl-carrier protein] methyl ester esterase activity"/>
    <property type="evidence" value="ECO:0007669"/>
    <property type="project" value="UniProtKB-EC"/>
</dbReference>
<dbReference type="GO" id="GO:0009102">
    <property type="term" value="P:biotin biosynthetic process"/>
    <property type="evidence" value="ECO:0007669"/>
    <property type="project" value="UniProtKB-UniRule"/>
</dbReference>
<dbReference type="Gene3D" id="3.40.50.1820">
    <property type="entry name" value="alpha/beta hydrolase"/>
    <property type="match status" value="1"/>
</dbReference>
<dbReference type="HAMAP" id="MF_01260">
    <property type="entry name" value="Carboxylester"/>
    <property type="match status" value="1"/>
</dbReference>
<dbReference type="InterPro" id="IPR000073">
    <property type="entry name" value="AB_hydrolase_1"/>
</dbReference>
<dbReference type="InterPro" id="IPR029058">
    <property type="entry name" value="AB_hydrolase_fold"/>
</dbReference>
<dbReference type="InterPro" id="IPR010076">
    <property type="entry name" value="BioH"/>
</dbReference>
<dbReference type="InterPro" id="IPR050228">
    <property type="entry name" value="Carboxylesterase_BioH"/>
</dbReference>
<dbReference type="NCBIfam" id="TIGR01738">
    <property type="entry name" value="bioH"/>
    <property type="match status" value="1"/>
</dbReference>
<dbReference type="PANTHER" id="PTHR43194">
    <property type="entry name" value="HYDROLASE ALPHA/BETA FOLD FAMILY"/>
    <property type="match status" value="1"/>
</dbReference>
<dbReference type="PANTHER" id="PTHR43194:SF5">
    <property type="entry name" value="PIMELOYL-[ACYL-CARRIER PROTEIN] METHYL ESTER ESTERASE"/>
    <property type="match status" value="1"/>
</dbReference>
<dbReference type="Pfam" id="PF00561">
    <property type="entry name" value="Abhydrolase_1"/>
    <property type="match status" value="1"/>
</dbReference>
<dbReference type="SUPFAM" id="SSF53474">
    <property type="entry name" value="alpha/beta-Hydrolases"/>
    <property type="match status" value="1"/>
</dbReference>
<reference key="1">
    <citation type="journal article" date="2010" name="J. Bacteriol.">
        <title>Whole genome sequences of two Xylella fastidiosa strains (M12 and M23) causing almond leaf scorch disease in California.</title>
        <authorList>
            <person name="Chen J."/>
            <person name="Xie G."/>
            <person name="Han S."/>
            <person name="Chertkov O."/>
            <person name="Sims D."/>
            <person name="Civerolo E.L."/>
        </authorList>
    </citation>
    <scope>NUCLEOTIDE SEQUENCE [LARGE SCALE GENOMIC DNA]</scope>
    <source>
        <strain>M23</strain>
    </source>
</reference>
<proteinExistence type="inferred from homology"/>